<dbReference type="EMBL" id="CP000950">
    <property type="protein sequence ID" value="ACA69011.1"/>
    <property type="molecule type" value="Genomic_DNA"/>
</dbReference>
<dbReference type="RefSeq" id="WP_002208766.1">
    <property type="nucleotide sequence ID" value="NZ_CP009792.1"/>
</dbReference>
<dbReference type="SMR" id="B1JRK3"/>
<dbReference type="KEGG" id="ypy:YPK_2734"/>
<dbReference type="PATRIC" id="fig|502800.11.peg.3438"/>
<dbReference type="GO" id="GO:0005886">
    <property type="term" value="C:plasma membrane"/>
    <property type="evidence" value="ECO:0007669"/>
    <property type="project" value="UniProtKB-SubCell"/>
</dbReference>
<dbReference type="GO" id="GO:0008324">
    <property type="term" value="F:monoatomic cation transmembrane transporter activity"/>
    <property type="evidence" value="ECO:0007669"/>
    <property type="project" value="InterPro"/>
</dbReference>
<dbReference type="GO" id="GO:0006813">
    <property type="term" value="P:potassium ion transport"/>
    <property type="evidence" value="ECO:0007669"/>
    <property type="project" value="InterPro"/>
</dbReference>
<dbReference type="FunFam" id="3.30.70.1450:FF:000003">
    <property type="entry name" value="Putative transport protein YbjL"/>
    <property type="match status" value="1"/>
</dbReference>
<dbReference type="Gene3D" id="3.30.70.1450">
    <property type="entry name" value="Regulator of K+ conductance, C-terminal domain"/>
    <property type="match status" value="2"/>
</dbReference>
<dbReference type="HAMAP" id="MF_01015">
    <property type="entry name" value="YbjL"/>
    <property type="match status" value="1"/>
</dbReference>
<dbReference type="InterPro" id="IPR050144">
    <property type="entry name" value="AAE_transporter"/>
</dbReference>
<dbReference type="InterPro" id="IPR006037">
    <property type="entry name" value="RCK_C"/>
</dbReference>
<dbReference type="InterPro" id="IPR036721">
    <property type="entry name" value="RCK_C_sf"/>
</dbReference>
<dbReference type="InterPro" id="IPR023017">
    <property type="entry name" value="Transp_YbjL_put"/>
</dbReference>
<dbReference type="InterPro" id="IPR006512">
    <property type="entry name" value="YidE_YbjL"/>
</dbReference>
<dbReference type="NCBIfam" id="NF003440">
    <property type="entry name" value="PRK04972.1"/>
    <property type="match status" value="1"/>
</dbReference>
<dbReference type="NCBIfam" id="TIGR01625">
    <property type="entry name" value="YidE_YbjL_dupl"/>
    <property type="match status" value="2"/>
</dbReference>
<dbReference type="PANTHER" id="PTHR30445">
    <property type="entry name" value="K(+)_H(+) ANTIPORTER SUBUNIT KHTT"/>
    <property type="match status" value="1"/>
</dbReference>
<dbReference type="PANTHER" id="PTHR30445:SF10">
    <property type="entry name" value="TRANSPORT PROTEIN YBJL-RELATED"/>
    <property type="match status" value="1"/>
</dbReference>
<dbReference type="Pfam" id="PF06826">
    <property type="entry name" value="Asp-Al_Ex"/>
    <property type="match status" value="2"/>
</dbReference>
<dbReference type="Pfam" id="PF02080">
    <property type="entry name" value="TrkA_C"/>
    <property type="match status" value="2"/>
</dbReference>
<dbReference type="SUPFAM" id="SSF116726">
    <property type="entry name" value="TrkA C-terminal domain-like"/>
    <property type="match status" value="2"/>
</dbReference>
<dbReference type="PROSITE" id="PS51202">
    <property type="entry name" value="RCK_C"/>
    <property type="match status" value="2"/>
</dbReference>
<organism>
    <name type="scientific">Yersinia pseudotuberculosis serotype O:3 (strain YPIII)</name>
    <dbReference type="NCBI Taxonomy" id="502800"/>
    <lineage>
        <taxon>Bacteria</taxon>
        <taxon>Pseudomonadati</taxon>
        <taxon>Pseudomonadota</taxon>
        <taxon>Gammaproteobacteria</taxon>
        <taxon>Enterobacterales</taxon>
        <taxon>Yersiniaceae</taxon>
        <taxon>Yersinia</taxon>
    </lineage>
</organism>
<accession>B1JRK3</accession>
<name>Y2734_YERPY</name>
<sequence>MNINVANLLNGNYILLLFVVLALGLCLGKLRLGSIQLGNAIGVLVVSLLLGQQHFAINTEALNLGFMLFIFCVGVEAGPNFFSIFFRDGKNYLMLALVMVGSAMILALGLGKLFGWDIGLTAGMLAGSMTSTPVLVGAGDTLRHTMANGSSLQQAQDNLSLGYALTYLIGLVSLILGARYLPKLQHQDLPTSAQQIARERGLDTDSQRKVYLPVIRAYRVGPELVAWADGKNLRELGIYRQTGCYIERIRRNGILANPDGDAVLQVGDEISLVGYPDAHSRLDPSFRNGKEVFDRDLLDMRIVTEEIVVKNSNAVGKRLSHLKLTDHGCFLNRVIRSQIEMPIDDNVVLNKGDVLQVSGDARRVKSVAEKIGFISIHSQVTDLLAFCSFFILGLMIGLITFQFSNFSFGIGNAAGLLLAGIMLGFLRANHPTFGYIPQGALNMVKEFGLMVFMAGVGLSAGGGINSSLGAVGGQMLISGLIVSLVPVVICFVFGAYVLRMNRALLFGAIMGARTCAPAMDIISDTARSNIPALGYAGTYAIANVLLTLAGSLIVILWPGILG</sequence>
<keyword id="KW-1003">Cell membrane</keyword>
<keyword id="KW-0472">Membrane</keyword>
<keyword id="KW-0677">Repeat</keyword>
<keyword id="KW-0812">Transmembrane</keyword>
<keyword id="KW-1133">Transmembrane helix</keyword>
<keyword id="KW-0813">Transport</keyword>
<evidence type="ECO:0000255" key="1">
    <source>
        <dbReference type="HAMAP-Rule" id="MF_01015"/>
    </source>
</evidence>
<feature type="chain" id="PRO_1000135201" description="Putative transport protein YPK_2734">
    <location>
        <begin position="1"/>
        <end position="562"/>
    </location>
</feature>
<feature type="transmembrane region" description="Helical" evidence="1">
    <location>
        <begin position="8"/>
        <end position="28"/>
    </location>
</feature>
<feature type="transmembrane region" description="Helical" evidence="1">
    <location>
        <begin position="37"/>
        <end position="57"/>
    </location>
</feature>
<feature type="transmembrane region" description="Helical" evidence="1">
    <location>
        <begin position="66"/>
        <end position="86"/>
    </location>
</feature>
<feature type="transmembrane region" description="Helical" evidence="1">
    <location>
        <begin position="94"/>
        <end position="114"/>
    </location>
</feature>
<feature type="transmembrane region" description="Helical" evidence="1">
    <location>
        <begin position="118"/>
        <end position="138"/>
    </location>
</feature>
<feature type="transmembrane region" description="Helical" evidence="1">
    <location>
        <begin position="158"/>
        <end position="178"/>
    </location>
</feature>
<feature type="transmembrane region" description="Helical" evidence="1">
    <location>
        <begin position="383"/>
        <end position="403"/>
    </location>
</feature>
<feature type="transmembrane region" description="Helical" evidence="1">
    <location>
        <begin position="406"/>
        <end position="426"/>
    </location>
</feature>
<feature type="transmembrane region" description="Helical" evidence="1">
    <location>
        <begin position="447"/>
        <end position="467"/>
    </location>
</feature>
<feature type="transmembrane region" description="Helical" evidence="1">
    <location>
        <begin position="475"/>
        <end position="495"/>
    </location>
</feature>
<feature type="transmembrane region" description="Helical" evidence="1">
    <location>
        <begin position="541"/>
        <end position="561"/>
    </location>
</feature>
<feature type="domain" description="RCK C-terminal 1" evidence="1">
    <location>
        <begin position="202"/>
        <end position="288"/>
    </location>
</feature>
<feature type="domain" description="RCK C-terminal 2" evidence="1">
    <location>
        <begin position="290"/>
        <end position="373"/>
    </location>
</feature>
<protein>
    <recommendedName>
        <fullName evidence="1">Putative transport protein YPK_2734</fullName>
    </recommendedName>
</protein>
<gene>
    <name type="ordered locus">YPK_2734</name>
</gene>
<reference key="1">
    <citation type="submission" date="2008-02" db="EMBL/GenBank/DDBJ databases">
        <title>Complete sequence of Yersinia pseudotuberculosis YPIII.</title>
        <authorList>
            <consortium name="US DOE Joint Genome Institute"/>
            <person name="Copeland A."/>
            <person name="Lucas S."/>
            <person name="Lapidus A."/>
            <person name="Glavina del Rio T."/>
            <person name="Dalin E."/>
            <person name="Tice H."/>
            <person name="Bruce D."/>
            <person name="Goodwin L."/>
            <person name="Pitluck S."/>
            <person name="Munk A.C."/>
            <person name="Brettin T."/>
            <person name="Detter J.C."/>
            <person name="Han C."/>
            <person name="Tapia R."/>
            <person name="Schmutz J."/>
            <person name="Larimer F."/>
            <person name="Land M."/>
            <person name="Hauser L."/>
            <person name="Challacombe J.F."/>
            <person name="Green L."/>
            <person name="Lindler L.E."/>
            <person name="Nikolich M.P."/>
            <person name="Richardson P."/>
        </authorList>
    </citation>
    <scope>NUCLEOTIDE SEQUENCE [LARGE SCALE GENOMIC DNA]</scope>
    <source>
        <strain>YPIII</strain>
    </source>
</reference>
<comment type="subcellular location">
    <subcellularLocation>
        <location evidence="1">Cell membrane</location>
        <topology evidence="1">Multi-pass membrane protein</topology>
    </subcellularLocation>
</comment>
<comment type="similarity">
    <text evidence="1">Belongs to the AAE transporter (TC 2.A.81) family. YbjL subfamily.</text>
</comment>
<proteinExistence type="inferred from homology"/>